<gene>
    <name evidence="1" type="primary">rps10</name>
    <name type="ordered locus">HQ_3384A</name>
</gene>
<protein>
    <recommendedName>
        <fullName evidence="1">Small ribosomal subunit protein uS10</fullName>
    </recommendedName>
    <alternativeName>
        <fullName evidence="3">30S ribosomal protein S10</fullName>
    </alternativeName>
</protein>
<proteinExistence type="inferred from homology"/>
<comment type="function">
    <text evidence="1">Involved in the binding of tRNA to the ribosomes.</text>
</comment>
<comment type="subunit">
    <text evidence="1">Part of the 30S ribosomal subunit.</text>
</comment>
<comment type="similarity">
    <text evidence="1">Belongs to the universal ribosomal protein uS10 family.</text>
</comment>
<accession>Q18EY6</accession>
<keyword id="KW-1185">Reference proteome</keyword>
<keyword id="KW-0687">Ribonucleoprotein</keyword>
<keyword id="KW-0689">Ribosomal protein</keyword>
<sequence>MQQARVRLAGTSPDDLDDICDDVRDIADTTGVNLSGPIPLPTKTLEIPTRKSPDGEGTATWEHWEMRVHKRLIDIDADERALRQLMRIQVPNDVSIEIVLED</sequence>
<name>RS10_HALWD</name>
<reference key="1">
    <citation type="journal article" date="2006" name="BMC Genomics">
        <title>The genome of the square archaeon Haloquadratum walsbyi: life at the limits of water activity.</title>
        <authorList>
            <person name="Bolhuis H."/>
            <person name="Palm P."/>
            <person name="Wende A."/>
            <person name="Falb M."/>
            <person name="Rampp M."/>
            <person name="Rodriguez-Valera F."/>
            <person name="Pfeiffer F."/>
            <person name="Oesterhelt D."/>
        </authorList>
    </citation>
    <scope>NUCLEOTIDE SEQUENCE [LARGE SCALE GENOMIC DNA]</scope>
    <source>
        <strain>DSM 16790 / HBSQ001</strain>
    </source>
</reference>
<organism>
    <name type="scientific">Haloquadratum walsbyi (strain DSM 16790 / HBSQ001)</name>
    <dbReference type="NCBI Taxonomy" id="362976"/>
    <lineage>
        <taxon>Archaea</taxon>
        <taxon>Methanobacteriati</taxon>
        <taxon>Methanobacteriota</taxon>
        <taxon>Stenosarchaea group</taxon>
        <taxon>Halobacteria</taxon>
        <taxon>Halobacteriales</taxon>
        <taxon>Haloferacaceae</taxon>
        <taxon>Haloquadratum</taxon>
    </lineage>
</organism>
<evidence type="ECO:0000255" key="1">
    <source>
        <dbReference type="HAMAP-Rule" id="MF_00508"/>
    </source>
</evidence>
<evidence type="ECO:0000256" key="2">
    <source>
        <dbReference type="SAM" id="MobiDB-lite"/>
    </source>
</evidence>
<evidence type="ECO:0000305" key="3"/>
<feature type="chain" id="PRO_0000258581" description="Small ribosomal subunit protein uS10">
    <location>
        <begin position="1"/>
        <end position="102"/>
    </location>
</feature>
<feature type="region of interest" description="Disordered" evidence="2">
    <location>
        <begin position="30"/>
        <end position="58"/>
    </location>
</feature>
<dbReference type="EMBL" id="AM180088">
    <property type="protein sequence ID" value="CAJ53481.1"/>
    <property type="molecule type" value="Genomic_DNA"/>
</dbReference>
<dbReference type="SMR" id="Q18EY6"/>
<dbReference type="STRING" id="362976.HQ_3384A"/>
<dbReference type="GeneID" id="4194646"/>
<dbReference type="KEGG" id="hwa:HQ_3384A"/>
<dbReference type="eggNOG" id="arCOG01758">
    <property type="taxonomic scope" value="Archaea"/>
</dbReference>
<dbReference type="HOGENOM" id="CLU_122625_0_1_2"/>
<dbReference type="Proteomes" id="UP000001975">
    <property type="component" value="Chromosome"/>
</dbReference>
<dbReference type="GO" id="GO:0015935">
    <property type="term" value="C:small ribosomal subunit"/>
    <property type="evidence" value="ECO:0007669"/>
    <property type="project" value="InterPro"/>
</dbReference>
<dbReference type="GO" id="GO:0003735">
    <property type="term" value="F:structural constituent of ribosome"/>
    <property type="evidence" value="ECO:0007669"/>
    <property type="project" value="InterPro"/>
</dbReference>
<dbReference type="GO" id="GO:0000049">
    <property type="term" value="F:tRNA binding"/>
    <property type="evidence" value="ECO:0007669"/>
    <property type="project" value="UniProtKB-UniRule"/>
</dbReference>
<dbReference type="GO" id="GO:0006412">
    <property type="term" value="P:translation"/>
    <property type="evidence" value="ECO:0007669"/>
    <property type="project" value="UniProtKB-UniRule"/>
</dbReference>
<dbReference type="FunFam" id="3.30.70.600:FF:000004">
    <property type="entry name" value="30S ribosomal protein S10"/>
    <property type="match status" value="1"/>
</dbReference>
<dbReference type="Gene3D" id="3.30.70.600">
    <property type="entry name" value="Ribosomal protein S10 domain"/>
    <property type="match status" value="1"/>
</dbReference>
<dbReference type="HAMAP" id="MF_00508">
    <property type="entry name" value="Ribosomal_uS10"/>
    <property type="match status" value="1"/>
</dbReference>
<dbReference type="InterPro" id="IPR001848">
    <property type="entry name" value="Ribosomal_uS10"/>
</dbReference>
<dbReference type="InterPro" id="IPR018268">
    <property type="entry name" value="Ribosomal_uS10_CS"/>
</dbReference>
<dbReference type="InterPro" id="IPR027486">
    <property type="entry name" value="Ribosomal_uS10_dom"/>
</dbReference>
<dbReference type="InterPro" id="IPR036838">
    <property type="entry name" value="Ribosomal_uS10_dom_sf"/>
</dbReference>
<dbReference type="InterPro" id="IPR005729">
    <property type="entry name" value="Ribosomal_uS10_euk/arc"/>
</dbReference>
<dbReference type="NCBIfam" id="TIGR01046">
    <property type="entry name" value="uS10_euk_arch"/>
    <property type="match status" value="1"/>
</dbReference>
<dbReference type="PANTHER" id="PTHR11700">
    <property type="entry name" value="30S RIBOSOMAL PROTEIN S10 FAMILY MEMBER"/>
    <property type="match status" value="1"/>
</dbReference>
<dbReference type="Pfam" id="PF00338">
    <property type="entry name" value="Ribosomal_S10"/>
    <property type="match status" value="1"/>
</dbReference>
<dbReference type="PRINTS" id="PR00971">
    <property type="entry name" value="RIBOSOMALS10"/>
</dbReference>
<dbReference type="SMART" id="SM01403">
    <property type="entry name" value="Ribosomal_S10"/>
    <property type="match status" value="1"/>
</dbReference>
<dbReference type="SUPFAM" id="SSF54999">
    <property type="entry name" value="Ribosomal protein S10"/>
    <property type="match status" value="1"/>
</dbReference>
<dbReference type="PROSITE" id="PS00361">
    <property type="entry name" value="RIBOSOMAL_S10"/>
    <property type="match status" value="1"/>
</dbReference>